<protein>
    <recommendedName>
        <fullName>Capsid protein</fullName>
        <shortName>CP</shortName>
    </recommendedName>
    <alternativeName>
        <fullName>Coat protein</fullName>
    </alternativeName>
</protein>
<proteinExistence type="predicted"/>
<keyword id="KW-0167">Capsid protein</keyword>
<keyword id="KW-1185">Reference proteome</keyword>
<keyword id="KW-0946">Virion</keyword>
<comment type="function">
    <text evidence="2">Capsid protein self-assembles to form a capsid about 33 nm in diameter. The capsid encapsulates two genomic RNAs as well as a third, subgenomic RNA (RNA3) (Potential).</text>
</comment>
<comment type="subcellular location">
    <subcellularLocation>
        <location evidence="2">Virion</location>
    </subcellularLocation>
</comment>
<organism>
    <name type="scientific">Raspberry bushy dwarf virus (isolate Malling Jewel raspberry/R15)</name>
    <name type="common">RBDV</name>
    <dbReference type="NCBI Taxonomy" id="652675"/>
    <lineage>
        <taxon>Viruses</taxon>
        <taxon>Riboviria</taxon>
        <taxon>Orthornavirae</taxon>
        <taxon>Kitrinoviricota</taxon>
        <taxon>Alsuviricetes</taxon>
        <taxon>Martellivirales</taxon>
        <taxon>Mayoviridae</taxon>
        <taxon>Idaeovirus</taxon>
        <taxon>Idaeovirus rubi</taxon>
    </lineage>
</organism>
<feature type="chain" id="PRO_0000402472" description="Capsid protein">
    <location>
        <begin position="1"/>
        <end position="274"/>
    </location>
</feature>
<feature type="region of interest" description="Disordered" evidence="1">
    <location>
        <begin position="88"/>
        <end position="113"/>
    </location>
</feature>
<feature type="compositionally biased region" description="Basic and acidic residues" evidence="1">
    <location>
        <begin position="102"/>
        <end position="113"/>
    </location>
</feature>
<sequence length="274" mass="30495">MSKKAVPPIVKAQYELYNRKLNRAIKVSGSQKKLDASFVGFSESSNPETGKPHADMSMSAKVKRVNTWLKNFDREYWDNQFASKPIPRPAKQVLKGSSSKSQQRDEGEVVFTRKDSQKSVRTVSYWVCTPEKSMKPLKYKEDENVVEVTFNDLAAQKAGDKLVSILLEINVVGGAVDDKGRVAVLEKDAAVTVDYLLGSPYEAINLVSGLNKINFRSMTDVVDSIPSLLNERKVCVFQNDDSSSFYIRKWANFLQEVSAVLPVGTGKSSTIVLT</sequence>
<reference key="1">
    <citation type="journal article" date="1991" name="J. Gen. Virol.">
        <title>Nucleotide sequence of raspberry bushy dwarf virus RNA-2: a bicistronic component of a bipartite genome.</title>
        <authorList>
            <person name="Natsuaki T."/>
            <person name="Mayo M.A."/>
            <person name="Jolly C.A."/>
            <person name="Murant A.F."/>
        </authorList>
    </citation>
    <scope>NUCLEOTIDE SEQUENCE [GENOMIC RNA]</scope>
</reference>
<organismHost>
    <name type="scientific">Rubus idaeus</name>
    <name type="common">Raspberry</name>
    <dbReference type="NCBI Taxonomy" id="32247"/>
</organismHost>
<organismHost>
    <name type="scientific">Rubus occidentalis</name>
    <name type="common">Black raspberry</name>
    <dbReference type="NCBI Taxonomy" id="75079"/>
</organismHost>
<organismHost>
    <name type="scientific">Rubus ursinus</name>
    <name type="common">California blackberry</name>
    <dbReference type="NCBI Taxonomy" id="75100"/>
</organismHost>
<accession>Q86564</accession>
<name>CAPSD_RBDVR</name>
<dbReference type="EMBL" id="S55890">
    <property type="protein sequence ID" value="AAB19768.1"/>
    <property type="molecule type" value="Genomic_RNA"/>
</dbReference>
<dbReference type="PIR" id="JQ1293">
    <property type="entry name" value="JQ1293"/>
</dbReference>
<dbReference type="RefSeq" id="NP_620467.1">
    <property type="nucleotide sequence ID" value="NC_003740.1"/>
</dbReference>
<dbReference type="SMR" id="Q86564"/>
<dbReference type="GeneID" id="963859"/>
<dbReference type="KEGG" id="vg:963859"/>
<dbReference type="Proteomes" id="UP000001102">
    <property type="component" value="Genome"/>
</dbReference>
<dbReference type="GO" id="GO:0019028">
    <property type="term" value="C:viral capsid"/>
    <property type="evidence" value="ECO:0007669"/>
    <property type="project" value="UniProtKB-KW"/>
</dbReference>
<dbReference type="InterPro" id="IPR009516">
    <property type="entry name" value="RBDV_coat"/>
</dbReference>
<dbReference type="Pfam" id="PF06593">
    <property type="entry name" value="RBDV_coat"/>
    <property type="match status" value="1"/>
</dbReference>
<evidence type="ECO:0000256" key="1">
    <source>
        <dbReference type="SAM" id="MobiDB-lite"/>
    </source>
</evidence>
<evidence type="ECO:0000305" key="2"/>